<protein>
    <recommendedName>
        <fullName evidence="5">Alpha terpineol synthase, chloroplastic</fullName>
        <ecNumber evidence="4">4.2.3.111</ecNumber>
        <ecNumber evidence="4">4.2.3.112</ecNumber>
    </recommendedName>
    <alternativeName>
        <fullName evidence="5">(-)-limonene synthase, chloroplastic</fullName>
        <ecNumber evidence="4">4.2.3.16</ecNumber>
    </alternativeName>
    <alternativeName>
        <fullName evidence="5">Geraniol synthase, chloroplastic</fullName>
        <ecNumber evidence="4">3.1.7.11</ecNumber>
    </alternativeName>
    <alternativeName>
        <fullName evidence="5">Terpene synthase alphaterp</fullName>
        <shortName evidence="5">PbTPS-alphaterp</shortName>
    </alternativeName>
    <alternativeName>
        <fullName evidence="5">Terpinolene synthase, chloroplastic</fullName>
        <ecNumber evidence="4">4.2.3.113</ecNumber>
    </alternativeName>
</protein>
<sequence length="626" mass="71948">MALLSVAPLASKSRLHKTLITSAHHLKPSPTTIPTLPVCTRRKTFTASITMCLTAPVSDDGVKRRIGNHHSNLWDHDFILSLSTPYEAPSYRERAARLISEVKEMFTEIEDGLSITPLNDLLSRLSMVDSIERLGVDRHFKMEIKSALDYVHRYWSEKGIGCGRESGVTDLNSTALGLRTLRLHGYPVSSSVLEQFKDEKGQFATSSIQTDPGEIRTIFNLFRASLVAFPNEKVMEDAQIFSTIYLKEYLEKIPLSSLSRQIEYVMEYGWHTNLPRLEARHYMDVFGDNEMPWMSYVNTEKLLELAKLEFNIFHSIQQRELKHISRWWKDSGFSQMNFVRHRHVEYYTLASCFAIDPEHSAFRVSFAKMCHLGTVLDDIYDTFGTMEELQLFTAAVKRWDPSATDSLPEYMKRVYTVLYETVNEMAQVAKKSQGRDTINYARHAWEAYLDSYMKEAEWISTGCLPTFEEYYENGKISFGYRICMLQPILSMDIPFPHHILQEIDYPSRFSSLAAGILRLKGDTRCYQADSARGEEASCISCYMKENPGLTEEDVVNHIHGMVDDLIKELNWELLKPDCNVPISSKKHAFDICRAFHHGYKYRDGYSVATNEIKDLVMITVLEPVPL</sequence>
<evidence type="ECO:0000250" key="1">
    <source>
        <dbReference type="UniProtKB" id="A0A1C9J6A7"/>
    </source>
</evidence>
<evidence type="ECO:0000250" key="2">
    <source>
        <dbReference type="UniProtKB" id="Q40577"/>
    </source>
</evidence>
<evidence type="ECO:0000255" key="3"/>
<evidence type="ECO:0000269" key="4">
    <source>
    </source>
</evidence>
<evidence type="ECO:0000303" key="5">
    <source>
    </source>
</evidence>
<evidence type="ECO:0000305" key="6"/>
<comment type="function">
    <text evidence="4">Monoterpene synthase (TPS) involved in the biosynthesis of monoterpene natural products included in conifer oleoresin secretions and volatile emissions; these compounds contribute to biotic and abiotic stress defense against herbivores and pathogens (PubMed:23679205). Catalyzes the conversion of (2E)-geranyl diphosphate (GPP) to (-)-alpha-terpineol, (+)-alpha-terpineol and terpin-4-ol, and, to a lower extent, to geraniol, terpinolene and (-)-limonene (PubMed:23679205).</text>
</comment>
<comment type="catalytic activity">
    <reaction evidence="4">
        <text>(2E)-geranyl diphosphate + H2O = (S)-alpha-terpineol + diphosphate</text>
        <dbReference type="Rhea" id="RHEA:32551"/>
        <dbReference type="ChEBI" id="CHEBI:128"/>
        <dbReference type="ChEBI" id="CHEBI:15377"/>
        <dbReference type="ChEBI" id="CHEBI:33019"/>
        <dbReference type="ChEBI" id="CHEBI:58057"/>
        <dbReference type="EC" id="4.2.3.111"/>
    </reaction>
    <physiologicalReaction direction="left-to-right" evidence="4">
        <dbReference type="Rhea" id="RHEA:32552"/>
    </physiologicalReaction>
</comment>
<comment type="catalytic activity">
    <reaction evidence="4">
        <text>(2E)-geranyl diphosphate + H2O = (R)-alpha-terpineol + diphosphate</text>
        <dbReference type="Rhea" id="RHEA:32555"/>
        <dbReference type="ChEBI" id="CHEBI:300"/>
        <dbReference type="ChEBI" id="CHEBI:15377"/>
        <dbReference type="ChEBI" id="CHEBI:33019"/>
        <dbReference type="ChEBI" id="CHEBI:58057"/>
        <dbReference type="EC" id="4.2.3.112"/>
    </reaction>
    <physiologicalReaction direction="left-to-right" evidence="4">
        <dbReference type="Rhea" id="RHEA:32556"/>
    </physiologicalReaction>
</comment>
<comment type="catalytic activity">
    <reaction evidence="4">
        <text>(2E)-geranyl diphosphate + H2O = (2E)-geraniol + diphosphate</text>
        <dbReference type="Rhea" id="RHEA:32679"/>
        <dbReference type="ChEBI" id="CHEBI:15377"/>
        <dbReference type="ChEBI" id="CHEBI:17447"/>
        <dbReference type="ChEBI" id="CHEBI:33019"/>
        <dbReference type="ChEBI" id="CHEBI:58057"/>
        <dbReference type="EC" id="3.1.7.11"/>
    </reaction>
    <physiologicalReaction direction="left-to-right" evidence="4">
        <dbReference type="Rhea" id="RHEA:32680"/>
    </physiologicalReaction>
</comment>
<comment type="catalytic activity">
    <reaction evidence="4">
        <text>(2E)-geranyl diphosphate = terpinolene + diphosphate</text>
        <dbReference type="Rhea" id="RHEA:25500"/>
        <dbReference type="ChEBI" id="CHEBI:9457"/>
        <dbReference type="ChEBI" id="CHEBI:33019"/>
        <dbReference type="ChEBI" id="CHEBI:58057"/>
        <dbReference type="EC" id="4.2.3.113"/>
    </reaction>
    <physiologicalReaction direction="left-to-right" evidence="4">
        <dbReference type="Rhea" id="RHEA:25501"/>
    </physiologicalReaction>
</comment>
<comment type="catalytic activity">
    <reaction evidence="4">
        <text>(2E)-geranyl diphosphate = (4S)-limonene + diphosphate</text>
        <dbReference type="Rhea" id="RHEA:12869"/>
        <dbReference type="ChEBI" id="CHEBI:15383"/>
        <dbReference type="ChEBI" id="CHEBI:33019"/>
        <dbReference type="ChEBI" id="CHEBI:58057"/>
        <dbReference type="EC" id="4.2.3.16"/>
    </reaction>
    <physiologicalReaction direction="left-to-right" evidence="4">
        <dbReference type="Rhea" id="RHEA:12870"/>
    </physiologicalReaction>
</comment>
<comment type="cofactor">
    <cofactor evidence="1">
        <name>Mg(2+)</name>
        <dbReference type="ChEBI" id="CHEBI:18420"/>
    </cofactor>
    <cofactor evidence="1">
        <name>Mn(2+)</name>
        <dbReference type="ChEBI" id="CHEBI:29035"/>
    </cofactor>
    <text evidence="1">Binds 3 Mg(2+) or Mn(2+) ions per subunit.</text>
</comment>
<comment type="pathway">
    <text evidence="4">Terpene metabolism; oleoresin biosynthesis.</text>
</comment>
<comment type="pathway">
    <text evidence="4">Secondary metabolite biosynthesis; terpenoid biosynthesis.</text>
</comment>
<comment type="subcellular location">
    <subcellularLocation>
        <location evidence="3">Plastid</location>
        <location evidence="3">Chloroplast</location>
    </subcellularLocation>
</comment>
<comment type="domain">
    <text evidence="6">The Asp-Asp-Xaa-Xaa-Asp/Glu (DDXXD/E) motif is important for the catalytic activity, presumably through binding to Mg(2+).</text>
</comment>
<comment type="similarity">
    <text evidence="6">Belongs to the terpene synthase family. Tpsd subfamily.</text>
</comment>
<organism>
    <name type="scientific">Pinus banksiana</name>
    <name type="common">Jack pine</name>
    <name type="synonym">Pinus divaricata</name>
    <dbReference type="NCBI Taxonomy" id="3353"/>
    <lineage>
        <taxon>Eukaryota</taxon>
        <taxon>Viridiplantae</taxon>
        <taxon>Streptophyta</taxon>
        <taxon>Embryophyta</taxon>
        <taxon>Tracheophyta</taxon>
        <taxon>Spermatophyta</taxon>
        <taxon>Pinopsida</taxon>
        <taxon>Pinidae</taxon>
        <taxon>Conifers I</taxon>
        <taxon>Pinales</taxon>
        <taxon>Pinaceae</taxon>
        <taxon>Pinus</taxon>
        <taxon>Pinus subgen. Pinus</taxon>
    </lineage>
</organism>
<reference key="1">
    <citation type="journal article" date="2013" name="BMC Plant Biol.">
        <title>Transcriptome resources and functional characterization of monoterpene synthases for two host species of the mountain pine beetle, lodgepole pine (Pinus contorta) and jack pine (Pinus banksiana).</title>
        <authorList>
            <person name="Hall D.E."/>
            <person name="Yuen M.M.S."/>
            <person name="Jancsik S."/>
            <person name="Quesada A.L."/>
            <person name="Dullat H.K."/>
            <person name="Li M."/>
            <person name="Henderson H."/>
            <person name="Arango-Velez A."/>
            <person name="Liao N.Y."/>
            <person name="Docking R.T."/>
            <person name="Chan S.K."/>
            <person name="Cooke J.E.K."/>
            <person name="Breuil C."/>
            <person name="Jones S.J.M."/>
            <person name="Keeling C.I."/>
            <person name="Bohlmann J."/>
        </authorList>
    </citation>
    <scope>NUCLEOTIDE SEQUENCE [MRNA]</scope>
    <scope>FUNCTION</scope>
    <scope>CATALYTIC ACTIVITY</scope>
    <scope>PATHWAY</scope>
</reference>
<gene>
    <name evidence="5" type="primary">TPS-Aterp</name>
</gene>
<keyword id="KW-0150">Chloroplast</keyword>
<keyword id="KW-0378">Hydrolase</keyword>
<keyword id="KW-0456">Lyase</keyword>
<keyword id="KW-0460">Magnesium</keyword>
<keyword id="KW-0479">Metal-binding</keyword>
<keyword id="KW-0934">Plastid</keyword>
<keyword id="KW-0809">Transit peptide</keyword>
<feature type="transit peptide" description="Chloroplast" evidence="3">
    <location>
        <begin position="1"/>
        <end position="38"/>
    </location>
</feature>
<feature type="chain" id="PRO_0000455017" description="Alpha terpineol synthase, chloroplastic">
    <location>
        <begin position="39"/>
        <end position="626"/>
    </location>
</feature>
<feature type="short sequence motif" description="DDXXD motif" evidence="6">
    <location>
        <begin position="377"/>
        <end position="381"/>
    </location>
</feature>
<feature type="binding site" evidence="2">
    <location>
        <position position="377"/>
    </location>
    <ligand>
        <name>Mg(2+)</name>
        <dbReference type="ChEBI" id="CHEBI:18420"/>
        <label>1</label>
    </ligand>
</feature>
<feature type="binding site" evidence="2">
    <location>
        <position position="377"/>
    </location>
    <ligand>
        <name>Mg(2+)</name>
        <dbReference type="ChEBI" id="CHEBI:18420"/>
        <label>2</label>
    </ligand>
</feature>
<feature type="binding site" evidence="2">
    <location>
        <position position="381"/>
    </location>
    <ligand>
        <name>Mg(2+)</name>
        <dbReference type="ChEBI" id="CHEBI:18420"/>
        <label>1</label>
    </ligand>
</feature>
<feature type="binding site" evidence="2">
    <location>
        <position position="381"/>
    </location>
    <ligand>
        <name>Mg(2+)</name>
        <dbReference type="ChEBI" id="CHEBI:18420"/>
        <label>2</label>
    </ligand>
</feature>
<feature type="binding site" evidence="2">
    <location>
        <position position="529"/>
    </location>
    <ligand>
        <name>Mg(2+)</name>
        <dbReference type="ChEBI" id="CHEBI:18420"/>
        <label>3</label>
    </ligand>
</feature>
<proteinExistence type="evidence at protein level"/>
<accession>R9QMR5</accession>
<dbReference type="EC" id="4.2.3.111" evidence="4"/>
<dbReference type="EC" id="4.2.3.112" evidence="4"/>
<dbReference type="EC" id="4.2.3.16" evidence="4"/>
<dbReference type="EC" id="3.1.7.11" evidence="4"/>
<dbReference type="EC" id="4.2.3.113" evidence="4"/>
<dbReference type="EMBL" id="JQ240308">
    <property type="protein sequence ID" value="AFU73860.1"/>
    <property type="molecule type" value="mRNA"/>
</dbReference>
<dbReference type="SMR" id="R9QMR5"/>
<dbReference type="UniPathway" id="UPA00213"/>
<dbReference type="UniPathway" id="UPA00924"/>
<dbReference type="GO" id="GO:0009507">
    <property type="term" value="C:chloroplast"/>
    <property type="evidence" value="ECO:0007669"/>
    <property type="project" value="UniProtKB-SubCell"/>
</dbReference>
<dbReference type="GO" id="GO:0050552">
    <property type="term" value="F:(4S)-limonene synthase activity"/>
    <property type="evidence" value="ECO:0000314"/>
    <property type="project" value="UniProtKB"/>
</dbReference>
<dbReference type="GO" id="GO:0016787">
    <property type="term" value="F:hydrolase activity"/>
    <property type="evidence" value="ECO:0007669"/>
    <property type="project" value="UniProtKB-KW"/>
</dbReference>
<dbReference type="GO" id="GO:0000287">
    <property type="term" value="F:magnesium ion binding"/>
    <property type="evidence" value="ECO:0007669"/>
    <property type="project" value="InterPro"/>
</dbReference>
<dbReference type="GO" id="GO:0010333">
    <property type="term" value="F:terpene synthase activity"/>
    <property type="evidence" value="ECO:0000314"/>
    <property type="project" value="UniProtKB"/>
</dbReference>
<dbReference type="GO" id="GO:0016102">
    <property type="term" value="P:diterpenoid biosynthetic process"/>
    <property type="evidence" value="ECO:0007669"/>
    <property type="project" value="InterPro"/>
</dbReference>
<dbReference type="GO" id="GO:1903448">
    <property type="term" value="P:geraniol biosynthetic process"/>
    <property type="evidence" value="ECO:0000314"/>
    <property type="project" value="UniProtKB"/>
</dbReference>
<dbReference type="GO" id="GO:0010597">
    <property type="term" value="P:green leaf volatile biosynthetic process"/>
    <property type="evidence" value="ECO:0000314"/>
    <property type="project" value="UniProtKB"/>
</dbReference>
<dbReference type="GO" id="GO:0016114">
    <property type="term" value="P:terpenoid biosynthetic process"/>
    <property type="evidence" value="ECO:0000314"/>
    <property type="project" value="UniProtKB"/>
</dbReference>
<dbReference type="CDD" id="cd00684">
    <property type="entry name" value="Terpene_cyclase_plant_C1"/>
    <property type="match status" value="1"/>
</dbReference>
<dbReference type="FunFam" id="1.50.10.130:FF:000002">
    <property type="entry name" value="Ent-copalyl diphosphate synthase, chloroplastic"/>
    <property type="match status" value="1"/>
</dbReference>
<dbReference type="FunFam" id="1.10.600.10:FF:000005">
    <property type="entry name" value="Ent-kaur-16-ene synthase, chloroplastic"/>
    <property type="match status" value="1"/>
</dbReference>
<dbReference type="Gene3D" id="1.10.600.10">
    <property type="entry name" value="Farnesyl Diphosphate Synthase"/>
    <property type="match status" value="1"/>
</dbReference>
<dbReference type="Gene3D" id="1.50.10.130">
    <property type="entry name" value="Terpene synthase, N-terminal domain"/>
    <property type="match status" value="1"/>
</dbReference>
<dbReference type="InterPro" id="IPR008949">
    <property type="entry name" value="Isoprenoid_synthase_dom_sf"/>
</dbReference>
<dbReference type="InterPro" id="IPR034741">
    <property type="entry name" value="Terpene_cyclase-like_1_C"/>
</dbReference>
<dbReference type="InterPro" id="IPR044814">
    <property type="entry name" value="Terpene_cyclase_plant_C1"/>
</dbReference>
<dbReference type="InterPro" id="IPR001906">
    <property type="entry name" value="Terpene_synth_N"/>
</dbReference>
<dbReference type="InterPro" id="IPR036965">
    <property type="entry name" value="Terpene_synth_N_sf"/>
</dbReference>
<dbReference type="InterPro" id="IPR050148">
    <property type="entry name" value="Terpene_synthase-like"/>
</dbReference>
<dbReference type="InterPro" id="IPR005630">
    <property type="entry name" value="Terpene_synthase_metal-bd"/>
</dbReference>
<dbReference type="InterPro" id="IPR008930">
    <property type="entry name" value="Terpenoid_cyclase/PrenylTrfase"/>
</dbReference>
<dbReference type="PANTHER" id="PTHR31739:SF25">
    <property type="entry name" value="(E,E)-GERANYLLINALOOL SYNTHASE"/>
    <property type="match status" value="1"/>
</dbReference>
<dbReference type="PANTHER" id="PTHR31739">
    <property type="entry name" value="ENT-COPALYL DIPHOSPHATE SYNTHASE, CHLOROPLASTIC"/>
    <property type="match status" value="1"/>
</dbReference>
<dbReference type="Pfam" id="PF01397">
    <property type="entry name" value="Terpene_synth"/>
    <property type="match status" value="1"/>
</dbReference>
<dbReference type="Pfam" id="PF03936">
    <property type="entry name" value="Terpene_synth_C"/>
    <property type="match status" value="1"/>
</dbReference>
<dbReference type="SFLD" id="SFLDS00005">
    <property type="entry name" value="Isoprenoid_Synthase_Type_I"/>
    <property type="match status" value="1"/>
</dbReference>
<dbReference type="SFLD" id="SFLDG01019">
    <property type="entry name" value="Terpene_Cyclase_Like_1_C_Termi"/>
    <property type="match status" value="1"/>
</dbReference>
<dbReference type="SFLD" id="SFLDG01014">
    <property type="entry name" value="Terpene_Cyclase_Like_1_N-term"/>
    <property type="match status" value="1"/>
</dbReference>
<dbReference type="SUPFAM" id="SSF48239">
    <property type="entry name" value="Terpenoid cyclases/Protein prenyltransferases"/>
    <property type="match status" value="1"/>
</dbReference>
<dbReference type="SUPFAM" id="SSF48576">
    <property type="entry name" value="Terpenoid synthases"/>
    <property type="match status" value="1"/>
</dbReference>
<name>ATERP_PINBN</name>